<feature type="chain" id="PRO_0000114676" description="Axonemal dynein light intermediate polypeptide 1">
    <location>
        <begin position="1"/>
        <end position="258"/>
    </location>
</feature>
<feature type="region of interest" description="Disordered" evidence="5">
    <location>
        <begin position="19"/>
        <end position="60"/>
    </location>
</feature>
<feature type="region of interest" description="Disordered" evidence="5">
    <location>
        <begin position="207"/>
        <end position="231"/>
    </location>
</feature>
<feature type="coiled-coil region" evidence="4">
    <location>
        <begin position="176"/>
        <end position="255"/>
    </location>
</feature>
<feature type="compositionally biased region" description="Low complexity" evidence="5">
    <location>
        <begin position="34"/>
        <end position="48"/>
    </location>
</feature>
<keyword id="KW-0966">Cell projection</keyword>
<keyword id="KW-0969">Cilium</keyword>
<keyword id="KW-0175">Coiled coil</keyword>
<keyword id="KW-0963">Cytoplasm</keyword>
<keyword id="KW-0243">Dynein</keyword>
<keyword id="KW-0282">Flagellum</keyword>
<keyword id="KW-0505">Motor protein</keyword>
<keyword id="KW-1185">Reference proteome</keyword>
<reference key="1">
    <citation type="submission" date="2005-06" db="EMBL/GenBank/DDBJ databases">
        <title>DNA sequences of macaque genes expressed in brain or testis and its evolutionary implications.</title>
        <authorList>
            <consortium name="International consortium for macaque cDNA sequencing and analysis"/>
        </authorList>
    </citation>
    <scope>NUCLEOTIDE SEQUENCE [LARGE SCALE MRNA]</scope>
    <source>
        <tissue>Testis</tissue>
    </source>
</reference>
<gene>
    <name type="primary">DNALI1</name>
    <name type="ORF">QtsA-16389</name>
</gene>
<protein>
    <recommendedName>
        <fullName>Axonemal dynein light intermediate polypeptide 1</fullName>
    </recommendedName>
    <alternativeName>
        <fullName>Inner dynein arm light chain, axonemal</fullName>
    </alternativeName>
</protein>
<proteinExistence type="evidence at transcript level"/>
<sequence length="258" mass="29648">MIPPADSLLKYDTPVLVSRNTEKRSPKARLLKVSPQQPGPSGSAPQLPKTKLPSAPCVPDPTKQAEEILNAILPPREWVEDTQLWIQQVSSTPSTRMDVVHLQEQLDLKLQQRQARETGICPVRRELYSQCFDELIREVTINCAERGLLLLRVRDEIRMTIAAYQTLYESSVAFGMRKALQAEQGKSDMERKIAELETEKRDLERQVNEQKAKCEATEKRESERRQVEEKKHNEEIQFLKRTNQQLKAQLEGIIAPKK</sequence>
<dbReference type="EMBL" id="AB179261">
    <property type="protein sequence ID" value="BAE02312.1"/>
    <property type="molecule type" value="mRNA"/>
</dbReference>
<dbReference type="RefSeq" id="NP_001272237.1">
    <property type="nucleotide sequence ID" value="NM_001285308.1"/>
</dbReference>
<dbReference type="RefSeq" id="XP_045230204.1">
    <property type="nucleotide sequence ID" value="XM_045374269.2"/>
</dbReference>
<dbReference type="SMR" id="Q4R3K5"/>
<dbReference type="STRING" id="9541.ENSMFAP00000037612"/>
<dbReference type="GeneID" id="101925364"/>
<dbReference type="eggNOG" id="KOG4001">
    <property type="taxonomic scope" value="Eukaryota"/>
</dbReference>
<dbReference type="Proteomes" id="UP000233100">
    <property type="component" value="Unplaced"/>
</dbReference>
<dbReference type="GO" id="GO:0005930">
    <property type="term" value="C:axoneme"/>
    <property type="evidence" value="ECO:0000250"/>
    <property type="project" value="UniProtKB"/>
</dbReference>
<dbReference type="GO" id="GO:0097546">
    <property type="term" value="C:ciliary base"/>
    <property type="evidence" value="ECO:0007669"/>
    <property type="project" value="TreeGrafter"/>
</dbReference>
<dbReference type="GO" id="GO:0120293">
    <property type="term" value="C:dynein axonemal particle"/>
    <property type="evidence" value="ECO:0000250"/>
    <property type="project" value="UniProtKB"/>
</dbReference>
<dbReference type="GO" id="GO:0030286">
    <property type="term" value="C:dynein complex"/>
    <property type="evidence" value="ECO:0007669"/>
    <property type="project" value="UniProtKB-KW"/>
</dbReference>
<dbReference type="GO" id="GO:0031514">
    <property type="term" value="C:motile cilium"/>
    <property type="evidence" value="ECO:0000250"/>
    <property type="project" value="UniProtKB"/>
</dbReference>
<dbReference type="GO" id="GO:0036126">
    <property type="term" value="C:sperm flagellum"/>
    <property type="evidence" value="ECO:0000250"/>
    <property type="project" value="UniProtKB"/>
</dbReference>
<dbReference type="GO" id="GO:0045504">
    <property type="term" value="F:dynein heavy chain binding"/>
    <property type="evidence" value="ECO:0007669"/>
    <property type="project" value="TreeGrafter"/>
</dbReference>
<dbReference type="GO" id="GO:0120316">
    <property type="term" value="P:sperm flagellum assembly"/>
    <property type="evidence" value="ECO:0000250"/>
    <property type="project" value="UniProtKB"/>
</dbReference>
<dbReference type="InterPro" id="IPR019347">
    <property type="entry name" value="Axonemal_dynein_light_chain"/>
</dbReference>
<dbReference type="PANTHER" id="PTHR13183:SF0">
    <property type="entry name" value="AXONEMAL DYNEIN LIGHT INTERMEDIATE POLYPEPTIDE 1"/>
    <property type="match status" value="1"/>
</dbReference>
<dbReference type="PANTHER" id="PTHR13183">
    <property type="entry name" value="AXONEMAL INNER ARM DYNEIN LIGHT CHAIN 28"/>
    <property type="match status" value="1"/>
</dbReference>
<dbReference type="Pfam" id="PF10211">
    <property type="entry name" value="Ax_dynein_light"/>
    <property type="match status" value="1"/>
</dbReference>
<accession>Q4R3K5</accession>
<name>IDLC_MACFA</name>
<comment type="function">
    <text evidence="3">Involved in sperm flagellum assembly.</text>
</comment>
<comment type="subunit">
    <text evidence="1 3">Interacts with CFAP45 (By similarity). Interacts with DYNC1H1 (By similarity).</text>
</comment>
<comment type="subcellular location">
    <subcellularLocation>
        <location evidence="1">Cell projection</location>
        <location evidence="1">Cilium</location>
    </subcellularLocation>
    <subcellularLocation>
        <location evidence="1">Cell projection</location>
        <location evidence="1">Cilium</location>
        <location evidence="1">Flagellum</location>
    </subcellularLocation>
    <subcellularLocation>
        <location evidence="2">Dynein axonemal particle</location>
    </subcellularLocation>
    <subcellularLocation>
        <location evidence="3">Cytoplasm</location>
    </subcellularLocation>
</comment>
<comment type="similarity">
    <text evidence="6">Belongs to the inner dynein arm light chain family.</text>
</comment>
<organism>
    <name type="scientific">Macaca fascicularis</name>
    <name type="common">Crab-eating macaque</name>
    <name type="synonym">Cynomolgus monkey</name>
    <dbReference type="NCBI Taxonomy" id="9541"/>
    <lineage>
        <taxon>Eukaryota</taxon>
        <taxon>Metazoa</taxon>
        <taxon>Chordata</taxon>
        <taxon>Craniata</taxon>
        <taxon>Vertebrata</taxon>
        <taxon>Euteleostomi</taxon>
        <taxon>Mammalia</taxon>
        <taxon>Eutheria</taxon>
        <taxon>Euarchontoglires</taxon>
        <taxon>Primates</taxon>
        <taxon>Haplorrhini</taxon>
        <taxon>Catarrhini</taxon>
        <taxon>Cercopithecidae</taxon>
        <taxon>Cercopithecinae</taxon>
        <taxon>Macaca</taxon>
    </lineage>
</organism>
<evidence type="ECO:0000250" key="1">
    <source>
        <dbReference type="UniProtKB" id="O14645"/>
    </source>
</evidence>
<evidence type="ECO:0000250" key="2">
    <source>
        <dbReference type="UniProtKB" id="Q6GN86"/>
    </source>
</evidence>
<evidence type="ECO:0000250" key="3">
    <source>
        <dbReference type="UniProtKB" id="Q8BVN8"/>
    </source>
</evidence>
<evidence type="ECO:0000255" key="4"/>
<evidence type="ECO:0000256" key="5">
    <source>
        <dbReference type="SAM" id="MobiDB-lite"/>
    </source>
</evidence>
<evidence type="ECO:0000305" key="6"/>